<dbReference type="EC" id="6.3.5.-" evidence="1"/>
<dbReference type="EMBL" id="CP000607">
    <property type="protein sequence ID" value="ABP36424.1"/>
    <property type="molecule type" value="Genomic_DNA"/>
</dbReference>
<dbReference type="SMR" id="A4SD65"/>
<dbReference type="STRING" id="290318.Cvib_0402"/>
<dbReference type="KEGG" id="pvi:Cvib_0402"/>
<dbReference type="eggNOG" id="COG0721">
    <property type="taxonomic scope" value="Bacteria"/>
</dbReference>
<dbReference type="HOGENOM" id="CLU_105899_2_0_10"/>
<dbReference type="OrthoDB" id="9813938at2"/>
<dbReference type="GO" id="GO:0050566">
    <property type="term" value="F:asparaginyl-tRNA synthase (glutamine-hydrolyzing) activity"/>
    <property type="evidence" value="ECO:0007669"/>
    <property type="project" value="RHEA"/>
</dbReference>
<dbReference type="GO" id="GO:0005524">
    <property type="term" value="F:ATP binding"/>
    <property type="evidence" value="ECO:0007669"/>
    <property type="project" value="UniProtKB-KW"/>
</dbReference>
<dbReference type="GO" id="GO:0050567">
    <property type="term" value="F:glutaminyl-tRNA synthase (glutamine-hydrolyzing) activity"/>
    <property type="evidence" value="ECO:0007669"/>
    <property type="project" value="UniProtKB-UniRule"/>
</dbReference>
<dbReference type="GO" id="GO:0070681">
    <property type="term" value="P:glutaminyl-tRNAGln biosynthesis via transamidation"/>
    <property type="evidence" value="ECO:0007669"/>
    <property type="project" value="TreeGrafter"/>
</dbReference>
<dbReference type="GO" id="GO:0006450">
    <property type="term" value="P:regulation of translational fidelity"/>
    <property type="evidence" value="ECO:0007669"/>
    <property type="project" value="InterPro"/>
</dbReference>
<dbReference type="GO" id="GO:0006412">
    <property type="term" value="P:translation"/>
    <property type="evidence" value="ECO:0007669"/>
    <property type="project" value="UniProtKB-UniRule"/>
</dbReference>
<dbReference type="Gene3D" id="1.10.20.60">
    <property type="entry name" value="Glu-tRNAGln amidotransferase C subunit, N-terminal domain"/>
    <property type="match status" value="1"/>
</dbReference>
<dbReference type="HAMAP" id="MF_00122">
    <property type="entry name" value="GatC"/>
    <property type="match status" value="1"/>
</dbReference>
<dbReference type="InterPro" id="IPR036113">
    <property type="entry name" value="Asp/Glu-ADT_sf_sub_c"/>
</dbReference>
<dbReference type="InterPro" id="IPR003837">
    <property type="entry name" value="GatC"/>
</dbReference>
<dbReference type="NCBIfam" id="TIGR00135">
    <property type="entry name" value="gatC"/>
    <property type="match status" value="1"/>
</dbReference>
<dbReference type="PANTHER" id="PTHR15004">
    <property type="entry name" value="GLUTAMYL-TRNA(GLN) AMIDOTRANSFERASE SUBUNIT C, MITOCHONDRIAL"/>
    <property type="match status" value="1"/>
</dbReference>
<dbReference type="PANTHER" id="PTHR15004:SF0">
    <property type="entry name" value="GLUTAMYL-TRNA(GLN) AMIDOTRANSFERASE SUBUNIT C, MITOCHONDRIAL"/>
    <property type="match status" value="1"/>
</dbReference>
<dbReference type="Pfam" id="PF02686">
    <property type="entry name" value="GatC"/>
    <property type="match status" value="1"/>
</dbReference>
<dbReference type="SUPFAM" id="SSF141000">
    <property type="entry name" value="Glu-tRNAGln amidotransferase C subunit"/>
    <property type="match status" value="1"/>
</dbReference>
<accession>A4SD65</accession>
<organism>
    <name type="scientific">Chlorobium phaeovibrioides (strain DSM 265 / 1930)</name>
    <name type="common">Prosthecochloris vibrioformis (strain DSM 265)</name>
    <dbReference type="NCBI Taxonomy" id="290318"/>
    <lineage>
        <taxon>Bacteria</taxon>
        <taxon>Pseudomonadati</taxon>
        <taxon>Chlorobiota</taxon>
        <taxon>Chlorobiia</taxon>
        <taxon>Chlorobiales</taxon>
        <taxon>Chlorobiaceae</taxon>
        <taxon>Chlorobium/Pelodictyon group</taxon>
        <taxon>Chlorobium</taxon>
    </lineage>
</organism>
<comment type="function">
    <text evidence="1">Allows the formation of correctly charged Asn-tRNA(Asn) or Gln-tRNA(Gln) through the transamidation of misacylated Asp-tRNA(Asn) or Glu-tRNA(Gln) in organisms which lack either or both of asparaginyl-tRNA or glutaminyl-tRNA synthetases. The reaction takes place in the presence of glutamine and ATP through an activated phospho-Asp-tRNA(Asn) or phospho-Glu-tRNA(Gln).</text>
</comment>
<comment type="catalytic activity">
    <reaction evidence="1">
        <text>L-glutamyl-tRNA(Gln) + L-glutamine + ATP + H2O = L-glutaminyl-tRNA(Gln) + L-glutamate + ADP + phosphate + H(+)</text>
        <dbReference type="Rhea" id="RHEA:17521"/>
        <dbReference type="Rhea" id="RHEA-COMP:9681"/>
        <dbReference type="Rhea" id="RHEA-COMP:9684"/>
        <dbReference type="ChEBI" id="CHEBI:15377"/>
        <dbReference type="ChEBI" id="CHEBI:15378"/>
        <dbReference type="ChEBI" id="CHEBI:29985"/>
        <dbReference type="ChEBI" id="CHEBI:30616"/>
        <dbReference type="ChEBI" id="CHEBI:43474"/>
        <dbReference type="ChEBI" id="CHEBI:58359"/>
        <dbReference type="ChEBI" id="CHEBI:78520"/>
        <dbReference type="ChEBI" id="CHEBI:78521"/>
        <dbReference type="ChEBI" id="CHEBI:456216"/>
    </reaction>
</comment>
<comment type="catalytic activity">
    <reaction evidence="1">
        <text>L-aspartyl-tRNA(Asn) + L-glutamine + ATP + H2O = L-asparaginyl-tRNA(Asn) + L-glutamate + ADP + phosphate + 2 H(+)</text>
        <dbReference type="Rhea" id="RHEA:14513"/>
        <dbReference type="Rhea" id="RHEA-COMP:9674"/>
        <dbReference type="Rhea" id="RHEA-COMP:9677"/>
        <dbReference type="ChEBI" id="CHEBI:15377"/>
        <dbReference type="ChEBI" id="CHEBI:15378"/>
        <dbReference type="ChEBI" id="CHEBI:29985"/>
        <dbReference type="ChEBI" id="CHEBI:30616"/>
        <dbReference type="ChEBI" id="CHEBI:43474"/>
        <dbReference type="ChEBI" id="CHEBI:58359"/>
        <dbReference type="ChEBI" id="CHEBI:78515"/>
        <dbReference type="ChEBI" id="CHEBI:78516"/>
        <dbReference type="ChEBI" id="CHEBI:456216"/>
    </reaction>
</comment>
<comment type="subunit">
    <text evidence="1">Heterotrimer of A, B and C subunits.</text>
</comment>
<comment type="similarity">
    <text evidence="1">Belongs to the GatC family.</text>
</comment>
<reference key="1">
    <citation type="submission" date="2007-03" db="EMBL/GenBank/DDBJ databases">
        <title>Complete sequence of Prosthecochloris vibrioformis DSM 265.</title>
        <authorList>
            <consortium name="US DOE Joint Genome Institute"/>
            <person name="Copeland A."/>
            <person name="Lucas S."/>
            <person name="Lapidus A."/>
            <person name="Barry K."/>
            <person name="Detter J.C."/>
            <person name="Glavina del Rio T."/>
            <person name="Hammon N."/>
            <person name="Israni S."/>
            <person name="Pitluck S."/>
            <person name="Schmutz J."/>
            <person name="Larimer F."/>
            <person name="Land M."/>
            <person name="Hauser L."/>
            <person name="Mikhailova N."/>
            <person name="Li T."/>
            <person name="Overmann J."/>
            <person name="Schuster S.C."/>
            <person name="Bryant D.A."/>
            <person name="Richardson P."/>
        </authorList>
    </citation>
    <scope>NUCLEOTIDE SEQUENCE [LARGE SCALE GENOMIC DNA]</scope>
    <source>
        <strain>DSM 265 / 1930</strain>
    </source>
</reference>
<proteinExistence type="inferred from homology"/>
<gene>
    <name evidence="1" type="primary">gatC</name>
    <name type="ordered locus">Cvib_0402</name>
</gene>
<keyword id="KW-0067">ATP-binding</keyword>
<keyword id="KW-0436">Ligase</keyword>
<keyword id="KW-0547">Nucleotide-binding</keyword>
<keyword id="KW-0648">Protein biosynthesis</keyword>
<evidence type="ECO:0000255" key="1">
    <source>
        <dbReference type="HAMAP-Rule" id="MF_00122"/>
    </source>
</evidence>
<name>GATC_CHLPM</name>
<feature type="chain" id="PRO_1000076190" description="Aspartyl/glutamyl-tRNA(Asn/Gln) amidotransferase subunit C">
    <location>
        <begin position="1"/>
        <end position="95"/>
    </location>
</feature>
<protein>
    <recommendedName>
        <fullName evidence="1">Aspartyl/glutamyl-tRNA(Asn/Gln) amidotransferase subunit C</fullName>
        <shortName evidence="1">Asp/Glu-ADT subunit C</shortName>
        <ecNumber evidence="1">6.3.5.-</ecNumber>
    </recommendedName>
</protein>
<sequence length="95" mass="10653">MSVTIDDVTYIAELARLRFSDDEALKMTDELNTILHYVDTLNEVDTEGVLPLSNIHDQKNVLRADEEHEPIANAAALSNAPDSQDRFFRVPKVLG</sequence>